<reference key="1">
    <citation type="journal article" date="2004" name="Proc. Natl. Acad. Sci. U.S.A.">
        <title>Structural flexibility in the Burkholderia mallei genome.</title>
        <authorList>
            <person name="Nierman W.C."/>
            <person name="DeShazer D."/>
            <person name="Kim H.S."/>
            <person name="Tettelin H."/>
            <person name="Nelson K.E."/>
            <person name="Feldblyum T.V."/>
            <person name="Ulrich R.L."/>
            <person name="Ronning C.M."/>
            <person name="Brinkac L.M."/>
            <person name="Daugherty S.C."/>
            <person name="Davidsen T.D."/>
            <person name="DeBoy R.T."/>
            <person name="Dimitrov G."/>
            <person name="Dodson R.J."/>
            <person name="Durkin A.S."/>
            <person name="Gwinn M.L."/>
            <person name="Haft D.H."/>
            <person name="Khouri H.M."/>
            <person name="Kolonay J.F."/>
            <person name="Madupu R."/>
            <person name="Mohammoud Y."/>
            <person name="Nelson W.C."/>
            <person name="Radune D."/>
            <person name="Romero C.M."/>
            <person name="Sarria S."/>
            <person name="Selengut J."/>
            <person name="Shamblin C."/>
            <person name="Sullivan S.A."/>
            <person name="White O."/>
            <person name="Yu Y."/>
            <person name="Zafar N."/>
            <person name="Zhou L."/>
            <person name="Fraser C.M."/>
        </authorList>
    </citation>
    <scope>NUCLEOTIDE SEQUENCE [LARGE SCALE GENOMIC DNA]</scope>
    <source>
        <strain>ATCC 23344</strain>
    </source>
</reference>
<protein>
    <recommendedName>
        <fullName evidence="1">Heat-inducible transcription repressor HrcA</fullName>
    </recommendedName>
</protein>
<comment type="function">
    <text evidence="1">Negative regulator of class I heat shock genes (grpE-dnaK-dnaJ and groELS operons). Prevents heat-shock induction of these operons.</text>
</comment>
<comment type="similarity">
    <text evidence="1">Belongs to the HrcA family.</text>
</comment>
<accession>Q62HD0</accession>
<keyword id="KW-1185">Reference proteome</keyword>
<keyword id="KW-0678">Repressor</keyword>
<keyword id="KW-0346">Stress response</keyword>
<keyword id="KW-0804">Transcription</keyword>
<keyword id="KW-0805">Transcription regulation</keyword>
<organism>
    <name type="scientific">Burkholderia mallei (strain ATCC 23344)</name>
    <dbReference type="NCBI Taxonomy" id="243160"/>
    <lineage>
        <taxon>Bacteria</taxon>
        <taxon>Pseudomonadati</taxon>
        <taxon>Pseudomonadota</taxon>
        <taxon>Betaproteobacteria</taxon>
        <taxon>Burkholderiales</taxon>
        <taxon>Burkholderiaceae</taxon>
        <taxon>Burkholderia</taxon>
        <taxon>pseudomallei group</taxon>
    </lineage>
</organism>
<name>HRCA_BURMA</name>
<proteinExistence type="inferred from homology"/>
<feature type="chain" id="PRO_0000182460" description="Heat-inducible transcription repressor HrcA">
    <location>
        <begin position="1"/>
        <end position="340"/>
    </location>
</feature>
<sequence length="340" mass="37426">MLDPRARTLLKTLIERYIADGQPVGSRTLSRYSGLELSPATIRNVMSDLEELGLVSSPHTSAGRVPTPRGYRLFVDTMLTVESPIDSDAVTRLVQTTLQAGEPQQRVVAAAASVLSNLSQFAGVVLTPRRSHVFKQIEFLRLSDKRILLIIVTPEGDVQNRMIATQRDYAPAQLTEASNYINAHFAGLSFDEVRRRLREEIDQLRGDMTALMHAAVTASTEEPDDEETVLISGERNLLEVADLSSDMARLRKLFDVFDQKTSLLQLLDVSSHAQGVQIFIGGESTLVPIDEMSVVTAPYEVNGKIVGTLGVIGPTRMAYNRVIPIVDITARLLSLTLSQQ</sequence>
<dbReference type="EMBL" id="CP000010">
    <property type="protein sequence ID" value="AAU50237.1"/>
    <property type="molecule type" value="Genomic_DNA"/>
</dbReference>
<dbReference type="RefSeq" id="WP_004194248.1">
    <property type="nucleotide sequence ID" value="NC_006348.1"/>
</dbReference>
<dbReference type="RefSeq" id="YP_103890.1">
    <property type="nucleotide sequence ID" value="NC_006348.1"/>
</dbReference>
<dbReference type="SMR" id="Q62HD0"/>
<dbReference type="GeneID" id="93061421"/>
<dbReference type="KEGG" id="bma:BMA2331"/>
<dbReference type="PATRIC" id="fig|243160.12.peg.2400"/>
<dbReference type="eggNOG" id="COG1420">
    <property type="taxonomic scope" value="Bacteria"/>
</dbReference>
<dbReference type="HOGENOM" id="CLU_050019_0_0_4"/>
<dbReference type="Proteomes" id="UP000006693">
    <property type="component" value="Chromosome 1"/>
</dbReference>
<dbReference type="GO" id="GO:0003677">
    <property type="term" value="F:DNA binding"/>
    <property type="evidence" value="ECO:0007669"/>
    <property type="project" value="InterPro"/>
</dbReference>
<dbReference type="GO" id="GO:0045892">
    <property type="term" value="P:negative regulation of DNA-templated transcription"/>
    <property type="evidence" value="ECO:0007669"/>
    <property type="project" value="UniProtKB-UniRule"/>
</dbReference>
<dbReference type="Gene3D" id="3.30.450.40">
    <property type="match status" value="1"/>
</dbReference>
<dbReference type="Gene3D" id="3.30.390.60">
    <property type="entry name" value="Heat-inducible transcription repressor hrca homolog, domain 3"/>
    <property type="match status" value="1"/>
</dbReference>
<dbReference type="Gene3D" id="1.10.10.10">
    <property type="entry name" value="Winged helix-like DNA-binding domain superfamily/Winged helix DNA-binding domain"/>
    <property type="match status" value="1"/>
</dbReference>
<dbReference type="HAMAP" id="MF_00081">
    <property type="entry name" value="HrcA"/>
    <property type="match status" value="1"/>
</dbReference>
<dbReference type="InterPro" id="IPR029016">
    <property type="entry name" value="GAF-like_dom_sf"/>
</dbReference>
<dbReference type="InterPro" id="IPR002571">
    <property type="entry name" value="HrcA"/>
</dbReference>
<dbReference type="InterPro" id="IPR021153">
    <property type="entry name" value="HrcA_C"/>
</dbReference>
<dbReference type="InterPro" id="IPR036388">
    <property type="entry name" value="WH-like_DNA-bd_sf"/>
</dbReference>
<dbReference type="InterPro" id="IPR036390">
    <property type="entry name" value="WH_DNA-bd_sf"/>
</dbReference>
<dbReference type="InterPro" id="IPR005104">
    <property type="entry name" value="WHTH_HrcA_DNA-bd"/>
</dbReference>
<dbReference type="InterPro" id="IPR023120">
    <property type="entry name" value="WHTH_transcript_rep_HrcA_IDD"/>
</dbReference>
<dbReference type="NCBIfam" id="TIGR00331">
    <property type="entry name" value="hrcA"/>
    <property type="match status" value="1"/>
</dbReference>
<dbReference type="PANTHER" id="PTHR34824">
    <property type="entry name" value="HEAT-INDUCIBLE TRANSCRIPTION REPRESSOR HRCA"/>
    <property type="match status" value="1"/>
</dbReference>
<dbReference type="PANTHER" id="PTHR34824:SF1">
    <property type="entry name" value="HEAT-INDUCIBLE TRANSCRIPTION REPRESSOR HRCA"/>
    <property type="match status" value="1"/>
</dbReference>
<dbReference type="Pfam" id="PF01628">
    <property type="entry name" value="HrcA"/>
    <property type="match status" value="1"/>
</dbReference>
<dbReference type="Pfam" id="PF03444">
    <property type="entry name" value="HrcA_DNA-bdg"/>
    <property type="match status" value="1"/>
</dbReference>
<dbReference type="PIRSF" id="PIRSF005485">
    <property type="entry name" value="HrcA"/>
    <property type="match status" value="1"/>
</dbReference>
<dbReference type="SUPFAM" id="SSF55781">
    <property type="entry name" value="GAF domain-like"/>
    <property type="match status" value="1"/>
</dbReference>
<dbReference type="SUPFAM" id="SSF46785">
    <property type="entry name" value="Winged helix' DNA-binding domain"/>
    <property type="match status" value="1"/>
</dbReference>
<gene>
    <name evidence="1" type="primary">hrcA</name>
    <name type="ordered locus">BMA2331</name>
</gene>
<evidence type="ECO:0000255" key="1">
    <source>
        <dbReference type="HAMAP-Rule" id="MF_00081"/>
    </source>
</evidence>